<reference key="1">
    <citation type="journal article" date="2004" name="Nature">
        <title>The sequence and analysis of duplication-rich human chromosome 16.</title>
        <authorList>
            <person name="Martin J."/>
            <person name="Han C."/>
            <person name="Gordon L.A."/>
            <person name="Terry A."/>
            <person name="Prabhakar S."/>
            <person name="She X."/>
            <person name="Xie G."/>
            <person name="Hellsten U."/>
            <person name="Chan Y.M."/>
            <person name="Altherr M."/>
            <person name="Couronne O."/>
            <person name="Aerts A."/>
            <person name="Bajorek E."/>
            <person name="Black S."/>
            <person name="Blumer H."/>
            <person name="Branscomb E."/>
            <person name="Brown N.C."/>
            <person name="Bruno W.J."/>
            <person name="Buckingham J.M."/>
            <person name="Callen D.F."/>
            <person name="Campbell C.S."/>
            <person name="Campbell M.L."/>
            <person name="Campbell E.W."/>
            <person name="Caoile C."/>
            <person name="Challacombe J.F."/>
            <person name="Chasteen L.A."/>
            <person name="Chertkov O."/>
            <person name="Chi H.C."/>
            <person name="Christensen M."/>
            <person name="Clark L.M."/>
            <person name="Cohn J.D."/>
            <person name="Denys M."/>
            <person name="Detter J.C."/>
            <person name="Dickson M."/>
            <person name="Dimitrijevic-Bussod M."/>
            <person name="Escobar J."/>
            <person name="Fawcett J.J."/>
            <person name="Flowers D."/>
            <person name="Fotopulos D."/>
            <person name="Glavina T."/>
            <person name="Gomez M."/>
            <person name="Gonzales E."/>
            <person name="Goodstein D."/>
            <person name="Goodwin L.A."/>
            <person name="Grady D.L."/>
            <person name="Grigoriev I."/>
            <person name="Groza M."/>
            <person name="Hammon N."/>
            <person name="Hawkins T."/>
            <person name="Haydu L."/>
            <person name="Hildebrand C.E."/>
            <person name="Huang W."/>
            <person name="Israni S."/>
            <person name="Jett J."/>
            <person name="Jewett P.B."/>
            <person name="Kadner K."/>
            <person name="Kimball H."/>
            <person name="Kobayashi A."/>
            <person name="Krawczyk M.-C."/>
            <person name="Leyba T."/>
            <person name="Longmire J.L."/>
            <person name="Lopez F."/>
            <person name="Lou Y."/>
            <person name="Lowry S."/>
            <person name="Ludeman T."/>
            <person name="Manohar C.F."/>
            <person name="Mark G.A."/>
            <person name="McMurray K.L."/>
            <person name="Meincke L.J."/>
            <person name="Morgan J."/>
            <person name="Moyzis R.K."/>
            <person name="Mundt M.O."/>
            <person name="Munk A.C."/>
            <person name="Nandkeshwar R.D."/>
            <person name="Pitluck S."/>
            <person name="Pollard M."/>
            <person name="Predki P."/>
            <person name="Parson-Quintana B."/>
            <person name="Ramirez L."/>
            <person name="Rash S."/>
            <person name="Retterer J."/>
            <person name="Ricke D.O."/>
            <person name="Robinson D.L."/>
            <person name="Rodriguez A."/>
            <person name="Salamov A."/>
            <person name="Saunders E.H."/>
            <person name="Scott D."/>
            <person name="Shough T."/>
            <person name="Stallings R.L."/>
            <person name="Stalvey M."/>
            <person name="Sutherland R.D."/>
            <person name="Tapia R."/>
            <person name="Tesmer J.G."/>
            <person name="Thayer N."/>
            <person name="Thompson L.S."/>
            <person name="Tice H."/>
            <person name="Torney D.C."/>
            <person name="Tran-Gyamfi M."/>
            <person name="Tsai M."/>
            <person name="Ulanovsky L.E."/>
            <person name="Ustaszewska A."/>
            <person name="Vo N."/>
            <person name="White P.S."/>
            <person name="Williams A.L."/>
            <person name="Wills P.L."/>
            <person name="Wu J.-R."/>
            <person name="Wu K."/>
            <person name="Yang J."/>
            <person name="DeJong P."/>
            <person name="Bruce D."/>
            <person name="Doggett N.A."/>
            <person name="Deaven L."/>
            <person name="Schmutz J."/>
            <person name="Grimwood J."/>
            <person name="Richardson P."/>
            <person name="Rokhsar D.S."/>
            <person name="Eichler E.E."/>
            <person name="Gilna P."/>
            <person name="Lucas S.M."/>
            <person name="Myers R.M."/>
            <person name="Rubin E.M."/>
            <person name="Pennacchio L.A."/>
        </authorList>
    </citation>
    <scope>NUCLEOTIDE SEQUENCE [LARGE SCALE GENOMIC DNA]</scope>
</reference>
<proteinExistence type="inferred from homology"/>
<sequence length="425" mass="49162">MVKLSIVLTPQFLSHDQSQLTKELQQHVKSVTCPCEYLRKVINSLAVYRHRETDFGVGVRDHPGQHGKTPSPQKLDNLIIIIIGFLRRYTFNILFCTSCLCVSFLKTIFWSRNGHDGSMDVQQRAWRSNRSRQKGLRSICMHTKKRVSSFRGNKIGLKDVITLRRHVETKVRAKIRKRKVTTKINRHDKINGKRKTARKQKMFQRAQELRRRAEDYHKCKIPPSARKPLCNWVRMVAAEHRHSSGLPYWPYLTAETLKNRMGRQPPPPTQQHSITDNSLSLKTPTECLLTPLPPSVDDNIKECPLAPLPPSPLPPSVDDNLKECLFVPLPPSPLPPSVDDNLKTPPLATQEAEVEKPPKPKRWRVDEVEQSPKPKRRRVDEVEQSPKPKRQREAEAQQLPKPKRRRLSKLRTRHCTQAWAIRINP</sequence>
<accession>E9PJ23</accession>
<gene>
    <name type="primary">NPIPB6</name>
</gene>
<protein>
    <recommendedName>
        <fullName>Nuclear pore complex-interacting protein family member B6</fullName>
    </recommendedName>
</protein>
<feature type="chain" id="PRO_0000423921" description="Nuclear pore complex-interacting protein family member B6">
    <location>
        <begin position="1"/>
        <end position="425"/>
    </location>
</feature>
<feature type="region of interest" description="Disordered" evidence="1">
    <location>
        <begin position="332"/>
        <end position="414"/>
    </location>
</feature>
<feature type="compositionally biased region" description="Basic and acidic residues" evidence="1">
    <location>
        <begin position="353"/>
        <end position="395"/>
    </location>
</feature>
<feature type="compositionally biased region" description="Basic residues" evidence="1">
    <location>
        <begin position="401"/>
        <end position="414"/>
    </location>
</feature>
<comment type="similarity">
    <text evidence="2">Belongs to the NPIP family.</text>
</comment>
<keyword id="KW-1185">Reference proteome</keyword>
<organism>
    <name type="scientific">Homo sapiens</name>
    <name type="common">Human</name>
    <dbReference type="NCBI Taxonomy" id="9606"/>
    <lineage>
        <taxon>Eukaryota</taxon>
        <taxon>Metazoa</taxon>
        <taxon>Chordata</taxon>
        <taxon>Craniata</taxon>
        <taxon>Vertebrata</taxon>
        <taxon>Euteleostomi</taxon>
        <taxon>Mammalia</taxon>
        <taxon>Eutheria</taxon>
        <taxon>Euarchontoglires</taxon>
        <taxon>Primates</taxon>
        <taxon>Haplorrhini</taxon>
        <taxon>Catarrhini</taxon>
        <taxon>Hominidae</taxon>
        <taxon>Homo</taxon>
    </lineage>
</organism>
<dbReference type="EMBL" id="AC138894">
    <property type="status" value="NOT_ANNOTATED_CDS"/>
    <property type="molecule type" value="Genomic_DNA"/>
</dbReference>
<dbReference type="EMBL" id="AC138904">
    <property type="status" value="NOT_ANNOTATED_CDS"/>
    <property type="molecule type" value="Genomic_DNA"/>
</dbReference>
<dbReference type="CCDS" id="CCDS61892.1"/>
<dbReference type="RefSeq" id="NP_001269453.1">
    <property type="nucleotide sequence ID" value="NM_001282524.2"/>
</dbReference>
<dbReference type="RefSeq" id="NP_001382204.1">
    <property type="nucleotide sequence ID" value="NM_001395275.1"/>
</dbReference>
<dbReference type="RefSeq" id="XP_011544231.1">
    <property type="nucleotide sequence ID" value="XM_011545929.2"/>
</dbReference>
<dbReference type="BioGRID" id="609159">
    <property type="interactions" value="19"/>
</dbReference>
<dbReference type="FunCoup" id="E9PJ23">
    <property type="interactions" value="22"/>
</dbReference>
<dbReference type="IntAct" id="E9PJ23">
    <property type="interactions" value="13"/>
</dbReference>
<dbReference type="STRING" id="9606.ENSP00000431871"/>
<dbReference type="GlyGen" id="E9PJ23">
    <property type="glycosylation" value="1 site"/>
</dbReference>
<dbReference type="BioMuta" id="NPIPB6"/>
<dbReference type="MassIVE" id="E9PJ23"/>
<dbReference type="PaxDb" id="9606-ENSP00000431871"/>
<dbReference type="PeptideAtlas" id="E9PJ23"/>
<dbReference type="DNASU" id="728741"/>
<dbReference type="Ensembl" id="ENST00000532254.1">
    <property type="protein sequence ID" value="ENSP00000431871.1"/>
    <property type="gene ID" value="ENSG00000198156.11"/>
</dbReference>
<dbReference type="Ensembl" id="ENST00000695563.1">
    <property type="protein sequence ID" value="ENSP00000512020.1"/>
    <property type="gene ID" value="ENSG00000198156.11"/>
</dbReference>
<dbReference type="GeneID" id="728741"/>
<dbReference type="KEGG" id="hsa:728741"/>
<dbReference type="MANE-Select" id="ENST00000695563.1">
    <property type="protein sequence ID" value="ENSP00000512020.1"/>
    <property type="RefSeq nucleotide sequence ID" value="NM_001395275.1"/>
    <property type="RefSeq protein sequence ID" value="NP_001382204.1"/>
</dbReference>
<dbReference type="UCSC" id="uc010vcr.4">
    <property type="organism name" value="human"/>
</dbReference>
<dbReference type="AGR" id="HGNC:37454"/>
<dbReference type="CTD" id="728741"/>
<dbReference type="GeneCards" id="NPIPB6"/>
<dbReference type="HGNC" id="HGNC:37454">
    <property type="gene designation" value="NPIPB6"/>
</dbReference>
<dbReference type="HPA" id="ENSG00000198156">
    <property type="expression patterns" value="Tissue enriched (testis)"/>
</dbReference>
<dbReference type="neXtProt" id="NX_E9PJ23"/>
<dbReference type="OpenTargets" id="ENSG00000198156"/>
<dbReference type="VEuPathDB" id="HostDB:ENSG00000198156"/>
<dbReference type="eggNOG" id="ENOG502TDBV">
    <property type="taxonomic scope" value="Eukaryota"/>
</dbReference>
<dbReference type="GeneTree" id="ENSGT00540000072033"/>
<dbReference type="HOGENOM" id="CLU_059939_0_0_1"/>
<dbReference type="InParanoid" id="E9PJ23"/>
<dbReference type="OrthoDB" id="9470913at2759"/>
<dbReference type="PAN-GO" id="E9PJ23">
    <property type="GO annotations" value="1 GO annotation based on evolutionary models"/>
</dbReference>
<dbReference type="PhylomeDB" id="E9PJ23"/>
<dbReference type="TreeFam" id="TF333389"/>
<dbReference type="PathwayCommons" id="E9PJ23"/>
<dbReference type="SignaLink" id="E9PJ23"/>
<dbReference type="BioGRID-ORCS" id="728741">
    <property type="hits" value="91 hits in 555 CRISPR screens"/>
</dbReference>
<dbReference type="ChiTaRS" id="NPIPB6">
    <property type="organism name" value="human"/>
</dbReference>
<dbReference type="GenomeRNAi" id="728741"/>
<dbReference type="Pharos" id="E9PJ23">
    <property type="development level" value="Tdark"/>
</dbReference>
<dbReference type="PRO" id="PR:E9PJ23"/>
<dbReference type="Proteomes" id="UP000005640">
    <property type="component" value="Chromosome 16"/>
</dbReference>
<dbReference type="RNAct" id="E9PJ23">
    <property type="molecule type" value="protein"/>
</dbReference>
<dbReference type="Bgee" id="ENSG00000198156">
    <property type="expression patterns" value="Expressed in left testis and 96 other cell types or tissues"/>
</dbReference>
<dbReference type="ExpressionAtlas" id="E9PJ23">
    <property type="expression patterns" value="baseline and differential"/>
</dbReference>
<dbReference type="InterPro" id="IPR009443">
    <property type="entry name" value="NPIP"/>
</dbReference>
<dbReference type="InterPro" id="IPR054697">
    <property type="entry name" value="NPIP_N"/>
</dbReference>
<dbReference type="PANTHER" id="PTHR15438">
    <property type="entry name" value="NUCLEAR PORE COMPLEX INTERACTING PROTEIN"/>
    <property type="match status" value="1"/>
</dbReference>
<dbReference type="PANTHER" id="PTHR15438:SF4">
    <property type="entry name" value="NUCLEAR PORE COMPLEX-INTERACTING PROTEIN FAMILY MEMBER B15-RELATED"/>
    <property type="match status" value="1"/>
</dbReference>
<dbReference type="Pfam" id="PF06409">
    <property type="entry name" value="NPIP"/>
    <property type="match status" value="1"/>
</dbReference>
<name>NPIB6_HUMAN</name>
<evidence type="ECO:0000256" key="1">
    <source>
        <dbReference type="SAM" id="MobiDB-lite"/>
    </source>
</evidence>
<evidence type="ECO:0000305" key="2"/>